<accession>Q8ZNB0</accession>
<feature type="signal peptide" evidence="1">
    <location>
        <begin position="1"/>
        <end position="19"/>
    </location>
</feature>
<feature type="chain" id="PRO_0000044582" description="Penicillin-insensitive murein endopeptidase">
    <location>
        <begin position="20"/>
        <end position="274"/>
    </location>
</feature>
<feature type="region of interest" description="Disordered" evidence="2">
    <location>
        <begin position="225"/>
        <end position="274"/>
    </location>
</feature>
<feature type="binding site" evidence="1">
    <location>
        <position position="110"/>
    </location>
    <ligand>
        <name>Zn(2+)</name>
        <dbReference type="ChEBI" id="CHEBI:29105"/>
        <label>1</label>
    </ligand>
</feature>
<feature type="binding site" evidence="1">
    <location>
        <position position="113"/>
    </location>
    <ligand>
        <name>Zn(2+)</name>
        <dbReference type="ChEBI" id="CHEBI:29105"/>
        <label>1</label>
    </ligand>
</feature>
<feature type="binding site" evidence="1">
    <location>
        <position position="120"/>
    </location>
    <ligand>
        <name>Zn(2+)</name>
        <dbReference type="ChEBI" id="CHEBI:29105"/>
        <label>1</label>
    </ligand>
</feature>
<feature type="binding site" evidence="1">
    <location>
        <position position="147"/>
    </location>
    <ligand>
        <name>Zn(2+)</name>
        <dbReference type="ChEBI" id="CHEBI:29105"/>
        <label>2</label>
    </ligand>
</feature>
<feature type="binding site" evidence="1">
    <location>
        <position position="150"/>
    </location>
    <ligand>
        <name>Zn(2+)</name>
        <dbReference type="ChEBI" id="CHEBI:29105"/>
        <label>2</label>
    </ligand>
</feature>
<feature type="binding site" evidence="1">
    <location>
        <position position="211"/>
    </location>
    <ligand>
        <name>Zn(2+)</name>
        <dbReference type="ChEBI" id="CHEBI:29105"/>
        <label>1</label>
    </ligand>
</feature>
<feature type="disulfide bond" evidence="1">
    <location>
        <begin position="44"/>
        <end position="265"/>
    </location>
</feature>
<feature type="disulfide bond" evidence="1">
    <location>
        <begin position="187"/>
        <end position="235"/>
    </location>
</feature>
<feature type="disulfide bond" evidence="1">
    <location>
        <begin position="216"/>
        <end position="223"/>
    </location>
</feature>
<name>MEPA_SALTY</name>
<organism>
    <name type="scientific">Salmonella typhimurium (strain LT2 / SGSC1412 / ATCC 700720)</name>
    <dbReference type="NCBI Taxonomy" id="99287"/>
    <lineage>
        <taxon>Bacteria</taxon>
        <taxon>Pseudomonadati</taxon>
        <taxon>Pseudomonadota</taxon>
        <taxon>Gammaproteobacteria</taxon>
        <taxon>Enterobacterales</taxon>
        <taxon>Enterobacteriaceae</taxon>
        <taxon>Salmonella</taxon>
    </lineage>
</organism>
<gene>
    <name evidence="1" type="primary">mepA</name>
    <name type="ordered locus">STM2383</name>
</gene>
<protein>
    <recommendedName>
        <fullName evidence="1">Penicillin-insensitive murein endopeptidase</fullName>
        <ecNumber evidence="1">3.4.24.-</ecNumber>
    </recommendedName>
    <alternativeName>
        <fullName evidence="1">D-alanyl-D-alanine-endopeptidase</fullName>
        <shortName evidence="1">DD-endopeptidase</shortName>
    </alternativeName>
</protein>
<evidence type="ECO:0000255" key="1">
    <source>
        <dbReference type="HAMAP-Rule" id="MF_01623"/>
    </source>
</evidence>
<evidence type="ECO:0000256" key="2">
    <source>
        <dbReference type="SAM" id="MobiDB-lite"/>
    </source>
</evidence>
<proteinExistence type="inferred from homology"/>
<sequence length="274" mass="30262">MKKTAIALLAWFVSSASLAATPWQKITHPVPGAAQSIGSFANGCIIGADTLPVQSDNYQVMRTDQRRYFGHPDLVMFIQRLSHQAQQRGLGTVLIGDMGMPAGGRFNGGHASHQTGLDVDIFLQLPKTRWSQAQLLRPQALDLVSRDGKHVVPSRWSSDIASLIKLAAQDNDVTRIFVNPAIKQQLCLDAGNDRDWLRKVRPWFQHRAHMHVRLRCPADSLECEDQPLPPPGDGCGAELQSWFEPPKPGTTKPEKKTPPPLPPSCQALLDEHVL</sequence>
<dbReference type="EC" id="3.4.24.-" evidence="1"/>
<dbReference type="EMBL" id="AE006468">
    <property type="protein sequence ID" value="AAL21284.1"/>
    <property type="molecule type" value="Genomic_DNA"/>
</dbReference>
<dbReference type="RefSeq" id="NP_461325.1">
    <property type="nucleotide sequence ID" value="NC_003197.2"/>
</dbReference>
<dbReference type="RefSeq" id="WP_000750428.1">
    <property type="nucleotide sequence ID" value="NC_003197.2"/>
</dbReference>
<dbReference type="SMR" id="Q8ZNB0"/>
<dbReference type="STRING" id="99287.STM2383"/>
<dbReference type="MEROPS" id="M74.001"/>
<dbReference type="PaxDb" id="99287-STM2383"/>
<dbReference type="GeneID" id="1253905"/>
<dbReference type="KEGG" id="stm:STM2383"/>
<dbReference type="PATRIC" id="fig|99287.12.peg.2522"/>
<dbReference type="HOGENOM" id="CLU_052496_0_0_6"/>
<dbReference type="OMA" id="VRPWWGH"/>
<dbReference type="PhylomeDB" id="Q8ZNB0"/>
<dbReference type="BioCyc" id="SENT99287:STM2383-MONOMER"/>
<dbReference type="Proteomes" id="UP000001014">
    <property type="component" value="Chromosome"/>
</dbReference>
<dbReference type="GO" id="GO:0030288">
    <property type="term" value="C:outer membrane-bounded periplasmic space"/>
    <property type="evidence" value="ECO:0007669"/>
    <property type="project" value="InterPro"/>
</dbReference>
<dbReference type="GO" id="GO:0046872">
    <property type="term" value="F:metal ion binding"/>
    <property type="evidence" value="ECO:0007669"/>
    <property type="project" value="UniProtKB-KW"/>
</dbReference>
<dbReference type="GO" id="GO:0004222">
    <property type="term" value="F:metalloendopeptidase activity"/>
    <property type="evidence" value="ECO:0007669"/>
    <property type="project" value="UniProtKB-UniRule"/>
</dbReference>
<dbReference type="GO" id="GO:0004252">
    <property type="term" value="F:serine-type endopeptidase activity"/>
    <property type="evidence" value="ECO:0007669"/>
    <property type="project" value="InterPro"/>
</dbReference>
<dbReference type="GO" id="GO:0000270">
    <property type="term" value="P:peptidoglycan metabolic process"/>
    <property type="evidence" value="ECO:0007669"/>
    <property type="project" value="UniProtKB-UniRule"/>
</dbReference>
<dbReference type="GO" id="GO:0006508">
    <property type="term" value="P:proteolysis"/>
    <property type="evidence" value="ECO:0007669"/>
    <property type="project" value="UniProtKB-KW"/>
</dbReference>
<dbReference type="FunFam" id="3.30.1380.10:FF:000002">
    <property type="entry name" value="Penicillin-insensitive murein endopeptidase"/>
    <property type="match status" value="1"/>
</dbReference>
<dbReference type="Gene3D" id="3.30.1380.10">
    <property type="match status" value="1"/>
</dbReference>
<dbReference type="HAMAP" id="MF_01623">
    <property type="entry name" value="MepA"/>
    <property type="match status" value="1"/>
</dbReference>
<dbReference type="InterPro" id="IPR009045">
    <property type="entry name" value="Hedgehog_sig/DD-Pept_Zn-bd_sf"/>
</dbReference>
<dbReference type="InterPro" id="IPR005073">
    <property type="entry name" value="Peptidase_M74"/>
</dbReference>
<dbReference type="NCBIfam" id="NF006947">
    <property type="entry name" value="PRK09429.1"/>
    <property type="match status" value="1"/>
</dbReference>
<dbReference type="Pfam" id="PF03411">
    <property type="entry name" value="Peptidase_M74"/>
    <property type="match status" value="1"/>
</dbReference>
<dbReference type="PIRSF" id="PIRSF018455">
    <property type="entry name" value="MepA"/>
    <property type="match status" value="1"/>
</dbReference>
<dbReference type="SUPFAM" id="SSF55166">
    <property type="entry name" value="Hedgehog/DD-peptidase"/>
    <property type="match status" value="1"/>
</dbReference>
<keyword id="KW-1015">Disulfide bond</keyword>
<keyword id="KW-0378">Hydrolase</keyword>
<keyword id="KW-0479">Metal-binding</keyword>
<keyword id="KW-0482">Metalloprotease</keyword>
<keyword id="KW-0574">Periplasm</keyword>
<keyword id="KW-0645">Protease</keyword>
<keyword id="KW-1185">Reference proteome</keyword>
<keyword id="KW-0732">Signal</keyword>
<keyword id="KW-0862">Zinc</keyword>
<comment type="function">
    <text evidence="1">Murein endopeptidase that cleaves the D-alanyl-meso-2,6-diamino-pimelyl amide bond that connects peptidoglycan strands. Likely plays a role in the removal of murein from the sacculus.</text>
</comment>
<comment type="cofactor">
    <cofactor evidence="1">
        <name>Zn(2+)</name>
        <dbReference type="ChEBI" id="CHEBI:29105"/>
    </cofactor>
    <text evidence="1">Binds 2 Zn(2+) ions per subunit. Zn(2+) ion 1 is bound in the active site. Zn(2+) ion 2 is bound at the dimer interface by residues from both subunits.</text>
</comment>
<comment type="subunit">
    <text evidence="1">Dimer.</text>
</comment>
<comment type="subcellular location">
    <subcellularLocation>
        <location evidence="1">Periplasm</location>
    </subcellularLocation>
</comment>
<comment type="similarity">
    <text evidence="1">Belongs to the peptidase M74 family.</text>
</comment>
<reference key="1">
    <citation type="journal article" date="2001" name="Nature">
        <title>Complete genome sequence of Salmonella enterica serovar Typhimurium LT2.</title>
        <authorList>
            <person name="McClelland M."/>
            <person name="Sanderson K.E."/>
            <person name="Spieth J."/>
            <person name="Clifton S.W."/>
            <person name="Latreille P."/>
            <person name="Courtney L."/>
            <person name="Porwollik S."/>
            <person name="Ali J."/>
            <person name="Dante M."/>
            <person name="Du F."/>
            <person name="Hou S."/>
            <person name="Layman D."/>
            <person name="Leonard S."/>
            <person name="Nguyen C."/>
            <person name="Scott K."/>
            <person name="Holmes A."/>
            <person name="Grewal N."/>
            <person name="Mulvaney E."/>
            <person name="Ryan E."/>
            <person name="Sun H."/>
            <person name="Florea L."/>
            <person name="Miller W."/>
            <person name="Stoneking T."/>
            <person name="Nhan M."/>
            <person name="Waterston R."/>
            <person name="Wilson R.K."/>
        </authorList>
    </citation>
    <scope>NUCLEOTIDE SEQUENCE [LARGE SCALE GENOMIC DNA]</scope>
    <source>
        <strain>LT2 / SGSC1412 / ATCC 700720</strain>
    </source>
</reference>